<sequence length="177" mass="18848">MAELATIARPYAEALFRVAKAADLNSWANLVSEMAQVAANPDVYALAHNPKVSDDLISSTFISALKSPVGAEAKNFINMLVQNDRLTLLPEIATQFHALKNAQEGAADAEIVSAFELSSAQLTELVATLEKKFGRKLNPTVTVDGALIGGVRVVVGDEVLDTSVRAKLQQMQVALTA</sequence>
<evidence type="ECO:0000255" key="1">
    <source>
        <dbReference type="HAMAP-Rule" id="MF_01416"/>
    </source>
</evidence>
<name>ATPD_JANMA</name>
<organism>
    <name type="scientific">Janthinobacterium sp. (strain Marseille)</name>
    <name type="common">Minibacterium massiliensis</name>
    <dbReference type="NCBI Taxonomy" id="375286"/>
    <lineage>
        <taxon>Bacteria</taxon>
        <taxon>Pseudomonadati</taxon>
        <taxon>Pseudomonadota</taxon>
        <taxon>Betaproteobacteria</taxon>
        <taxon>Burkholderiales</taxon>
        <taxon>Oxalobacteraceae</taxon>
        <taxon>Janthinobacterium</taxon>
    </lineage>
</organism>
<keyword id="KW-0066">ATP synthesis</keyword>
<keyword id="KW-0997">Cell inner membrane</keyword>
<keyword id="KW-1003">Cell membrane</keyword>
<keyword id="KW-0139">CF(1)</keyword>
<keyword id="KW-0375">Hydrogen ion transport</keyword>
<keyword id="KW-0406">Ion transport</keyword>
<keyword id="KW-0472">Membrane</keyword>
<keyword id="KW-0813">Transport</keyword>
<dbReference type="EMBL" id="CP000269">
    <property type="protein sequence ID" value="ABR88652.1"/>
    <property type="molecule type" value="Genomic_DNA"/>
</dbReference>
<dbReference type="RefSeq" id="WP_012081466.1">
    <property type="nucleotide sequence ID" value="NC_009659.1"/>
</dbReference>
<dbReference type="SMR" id="A6T473"/>
<dbReference type="STRING" id="375286.mma_3630"/>
<dbReference type="KEGG" id="mms:mma_3630"/>
<dbReference type="eggNOG" id="COG0712">
    <property type="taxonomic scope" value="Bacteria"/>
</dbReference>
<dbReference type="HOGENOM" id="CLU_085114_3_0_4"/>
<dbReference type="OrthoDB" id="9816221at2"/>
<dbReference type="Proteomes" id="UP000006388">
    <property type="component" value="Chromosome"/>
</dbReference>
<dbReference type="GO" id="GO:0005886">
    <property type="term" value="C:plasma membrane"/>
    <property type="evidence" value="ECO:0007669"/>
    <property type="project" value="UniProtKB-SubCell"/>
</dbReference>
<dbReference type="GO" id="GO:0045259">
    <property type="term" value="C:proton-transporting ATP synthase complex"/>
    <property type="evidence" value="ECO:0007669"/>
    <property type="project" value="UniProtKB-KW"/>
</dbReference>
<dbReference type="GO" id="GO:0046933">
    <property type="term" value="F:proton-transporting ATP synthase activity, rotational mechanism"/>
    <property type="evidence" value="ECO:0007669"/>
    <property type="project" value="UniProtKB-UniRule"/>
</dbReference>
<dbReference type="Gene3D" id="1.10.520.20">
    <property type="entry name" value="N-terminal domain of the delta subunit of the F1F0-ATP synthase"/>
    <property type="match status" value="1"/>
</dbReference>
<dbReference type="HAMAP" id="MF_01416">
    <property type="entry name" value="ATP_synth_delta_bact"/>
    <property type="match status" value="1"/>
</dbReference>
<dbReference type="InterPro" id="IPR026015">
    <property type="entry name" value="ATP_synth_OSCP/delta_N_sf"/>
</dbReference>
<dbReference type="InterPro" id="IPR000711">
    <property type="entry name" value="ATPase_OSCP/dsu"/>
</dbReference>
<dbReference type="NCBIfam" id="TIGR01145">
    <property type="entry name" value="ATP_synt_delta"/>
    <property type="match status" value="1"/>
</dbReference>
<dbReference type="NCBIfam" id="NF004402">
    <property type="entry name" value="PRK05758.2-2"/>
    <property type="match status" value="1"/>
</dbReference>
<dbReference type="PANTHER" id="PTHR11910">
    <property type="entry name" value="ATP SYNTHASE DELTA CHAIN"/>
    <property type="match status" value="1"/>
</dbReference>
<dbReference type="Pfam" id="PF00213">
    <property type="entry name" value="OSCP"/>
    <property type="match status" value="1"/>
</dbReference>
<dbReference type="PRINTS" id="PR00125">
    <property type="entry name" value="ATPASEDELTA"/>
</dbReference>
<dbReference type="SUPFAM" id="SSF47928">
    <property type="entry name" value="N-terminal domain of the delta subunit of the F1F0-ATP synthase"/>
    <property type="match status" value="1"/>
</dbReference>
<comment type="function">
    <text evidence="1">F(1)F(0) ATP synthase produces ATP from ADP in the presence of a proton or sodium gradient. F-type ATPases consist of two structural domains, F(1) containing the extramembraneous catalytic core and F(0) containing the membrane proton channel, linked together by a central stalk and a peripheral stalk. During catalysis, ATP synthesis in the catalytic domain of F(1) is coupled via a rotary mechanism of the central stalk subunits to proton translocation.</text>
</comment>
<comment type="function">
    <text evidence="1">This protein is part of the stalk that links CF(0) to CF(1). It either transmits conformational changes from CF(0) to CF(1) or is implicated in proton conduction.</text>
</comment>
<comment type="subunit">
    <text evidence="1">F-type ATPases have 2 components, F(1) - the catalytic core - and F(0) - the membrane proton channel. F(1) has five subunits: alpha(3), beta(3), gamma(1), delta(1), epsilon(1). F(0) has three main subunits: a(1), b(2) and c(10-14). The alpha and beta chains form an alternating ring which encloses part of the gamma chain. F(1) is attached to F(0) by a central stalk formed by the gamma and epsilon chains, while a peripheral stalk is formed by the delta and b chains.</text>
</comment>
<comment type="subcellular location">
    <subcellularLocation>
        <location evidence="1">Cell inner membrane</location>
        <topology evidence="1">Peripheral membrane protein</topology>
    </subcellularLocation>
</comment>
<comment type="similarity">
    <text evidence="1">Belongs to the ATPase delta chain family.</text>
</comment>
<feature type="chain" id="PRO_0000371003" description="ATP synthase subunit delta">
    <location>
        <begin position="1"/>
        <end position="177"/>
    </location>
</feature>
<accession>A6T473</accession>
<reference key="1">
    <citation type="journal article" date="2007" name="PLoS Genet.">
        <title>Genome analysis of Minibacterium massiliensis highlights the convergent evolution of water-living bacteria.</title>
        <authorList>
            <person name="Audic S."/>
            <person name="Robert C."/>
            <person name="Campagna B."/>
            <person name="Parinello H."/>
            <person name="Claverie J.-M."/>
            <person name="Raoult D."/>
            <person name="Drancourt M."/>
        </authorList>
    </citation>
    <scope>NUCLEOTIDE SEQUENCE [LARGE SCALE GENOMIC DNA]</scope>
    <source>
        <strain>Marseille</strain>
    </source>
</reference>
<proteinExistence type="inferred from homology"/>
<gene>
    <name evidence="1" type="primary">atpH</name>
    <name type="ordered locus">mma_3630</name>
</gene>
<protein>
    <recommendedName>
        <fullName evidence="1">ATP synthase subunit delta</fullName>
    </recommendedName>
    <alternativeName>
        <fullName evidence="1">ATP synthase F(1) sector subunit delta</fullName>
    </alternativeName>
    <alternativeName>
        <fullName evidence="1">F-type ATPase subunit delta</fullName>
        <shortName evidence="1">F-ATPase subunit delta</shortName>
    </alternativeName>
</protein>